<protein>
    <recommendedName>
        <fullName evidence="1">Bifunctional protein PyrR</fullName>
    </recommendedName>
    <domain>
        <recommendedName>
            <fullName evidence="1">Pyrimidine operon regulatory protein</fullName>
        </recommendedName>
    </domain>
    <domain>
        <recommendedName>
            <fullName evidence="1">Uracil phosphoribosyltransferase</fullName>
            <shortName evidence="1">UPRTase</shortName>
            <ecNumber evidence="1">2.4.2.9</ecNumber>
        </recommendedName>
    </domain>
</protein>
<accession>Q8DYV9</accession>
<gene>
    <name evidence="1" type="primary">pyrR</name>
    <name type="ordered locus">SAG1364</name>
</gene>
<organism>
    <name type="scientific">Streptococcus agalactiae serotype V (strain ATCC BAA-611 / 2603 V/R)</name>
    <dbReference type="NCBI Taxonomy" id="208435"/>
    <lineage>
        <taxon>Bacteria</taxon>
        <taxon>Bacillati</taxon>
        <taxon>Bacillota</taxon>
        <taxon>Bacilli</taxon>
        <taxon>Lactobacillales</taxon>
        <taxon>Streptococcaceae</taxon>
        <taxon>Streptococcus</taxon>
    </lineage>
</organism>
<evidence type="ECO:0000255" key="1">
    <source>
        <dbReference type="HAMAP-Rule" id="MF_01219"/>
    </source>
</evidence>
<comment type="function">
    <text evidence="1">Regulates transcriptional attenuation of the pyrimidine nucleotide (pyr) operon by binding in a uridine-dependent manner to specific sites on pyr mRNA. This disrupts an antiterminator hairpin in the RNA and favors formation of a downstream transcription terminator, leading to a reduced expression of downstream genes.</text>
</comment>
<comment type="function">
    <text evidence="1">Also displays a weak uracil phosphoribosyltransferase activity which is not physiologically significant.</text>
</comment>
<comment type="catalytic activity">
    <reaction evidence="1">
        <text>UMP + diphosphate = 5-phospho-alpha-D-ribose 1-diphosphate + uracil</text>
        <dbReference type="Rhea" id="RHEA:13017"/>
        <dbReference type="ChEBI" id="CHEBI:17568"/>
        <dbReference type="ChEBI" id="CHEBI:33019"/>
        <dbReference type="ChEBI" id="CHEBI:57865"/>
        <dbReference type="ChEBI" id="CHEBI:58017"/>
        <dbReference type="EC" id="2.4.2.9"/>
    </reaction>
</comment>
<comment type="subunit">
    <text evidence="1">Homodimer and homohexamer; in equilibrium.</text>
</comment>
<comment type="similarity">
    <text evidence="1">Belongs to the purine/pyrimidine phosphoribosyltransferase family. PyrR subfamily.</text>
</comment>
<dbReference type="EC" id="2.4.2.9" evidence="1"/>
<dbReference type="EMBL" id="AE009948">
    <property type="protein sequence ID" value="AAN00235.1"/>
    <property type="molecule type" value="Genomic_DNA"/>
</dbReference>
<dbReference type="RefSeq" id="NP_688362.1">
    <property type="nucleotide sequence ID" value="NC_004116.1"/>
</dbReference>
<dbReference type="RefSeq" id="WP_000823056.1">
    <property type="nucleotide sequence ID" value="NC_004116.1"/>
</dbReference>
<dbReference type="SMR" id="Q8DYV9"/>
<dbReference type="STRING" id="208435.SAG1364"/>
<dbReference type="GeneID" id="66886230"/>
<dbReference type="KEGG" id="sag:SAG1364"/>
<dbReference type="PATRIC" id="fig|208435.3.peg.1372"/>
<dbReference type="HOGENOM" id="CLU_094234_2_1_9"/>
<dbReference type="OrthoDB" id="9802227at2"/>
<dbReference type="Proteomes" id="UP000000821">
    <property type="component" value="Chromosome"/>
</dbReference>
<dbReference type="GO" id="GO:0003723">
    <property type="term" value="F:RNA binding"/>
    <property type="evidence" value="ECO:0007669"/>
    <property type="project" value="UniProtKB-UniRule"/>
</dbReference>
<dbReference type="GO" id="GO:0004845">
    <property type="term" value="F:uracil phosphoribosyltransferase activity"/>
    <property type="evidence" value="ECO:0007669"/>
    <property type="project" value="UniProtKB-UniRule"/>
</dbReference>
<dbReference type="GO" id="GO:0006353">
    <property type="term" value="P:DNA-templated transcription termination"/>
    <property type="evidence" value="ECO:0007669"/>
    <property type="project" value="UniProtKB-UniRule"/>
</dbReference>
<dbReference type="CDD" id="cd06223">
    <property type="entry name" value="PRTases_typeI"/>
    <property type="match status" value="1"/>
</dbReference>
<dbReference type="FunFam" id="3.40.50.2020:FF:000020">
    <property type="entry name" value="Bifunctional protein PyrR"/>
    <property type="match status" value="1"/>
</dbReference>
<dbReference type="Gene3D" id="3.40.50.2020">
    <property type="match status" value="1"/>
</dbReference>
<dbReference type="HAMAP" id="MF_01219">
    <property type="entry name" value="PyrR"/>
    <property type="match status" value="1"/>
</dbReference>
<dbReference type="InterPro" id="IPR000836">
    <property type="entry name" value="PRibTrfase_dom"/>
</dbReference>
<dbReference type="InterPro" id="IPR029057">
    <property type="entry name" value="PRTase-like"/>
</dbReference>
<dbReference type="InterPro" id="IPR023050">
    <property type="entry name" value="PyrR"/>
</dbReference>
<dbReference type="InterPro" id="IPR050137">
    <property type="entry name" value="PyrR_bifunctional"/>
</dbReference>
<dbReference type="NCBIfam" id="NF003548">
    <property type="entry name" value="PRK05205.1-4"/>
    <property type="match status" value="1"/>
</dbReference>
<dbReference type="NCBIfam" id="NF003549">
    <property type="entry name" value="PRK05205.1-5"/>
    <property type="match status" value="1"/>
</dbReference>
<dbReference type="PANTHER" id="PTHR11608">
    <property type="entry name" value="BIFUNCTIONAL PROTEIN PYRR"/>
    <property type="match status" value="1"/>
</dbReference>
<dbReference type="PANTHER" id="PTHR11608:SF0">
    <property type="entry name" value="BIFUNCTIONAL PROTEIN PYRR"/>
    <property type="match status" value="1"/>
</dbReference>
<dbReference type="Pfam" id="PF00156">
    <property type="entry name" value="Pribosyltran"/>
    <property type="match status" value="1"/>
</dbReference>
<dbReference type="SUPFAM" id="SSF53271">
    <property type="entry name" value="PRTase-like"/>
    <property type="match status" value="1"/>
</dbReference>
<reference key="1">
    <citation type="journal article" date="2002" name="Proc. Natl. Acad. Sci. U.S.A.">
        <title>Complete genome sequence and comparative genomic analysis of an emerging human pathogen, serotype V Streptococcus agalactiae.</title>
        <authorList>
            <person name="Tettelin H."/>
            <person name="Masignani V."/>
            <person name="Cieslewicz M.J."/>
            <person name="Eisen J.A."/>
            <person name="Peterson S.N."/>
            <person name="Wessels M.R."/>
            <person name="Paulsen I.T."/>
            <person name="Nelson K.E."/>
            <person name="Margarit I."/>
            <person name="Read T.D."/>
            <person name="Madoff L.C."/>
            <person name="Wolf A.M."/>
            <person name="Beanan M.J."/>
            <person name="Brinkac L.M."/>
            <person name="Daugherty S.C."/>
            <person name="DeBoy R.T."/>
            <person name="Durkin A.S."/>
            <person name="Kolonay J.F."/>
            <person name="Madupu R."/>
            <person name="Lewis M.R."/>
            <person name="Radune D."/>
            <person name="Fedorova N.B."/>
            <person name="Scanlan D."/>
            <person name="Khouri H.M."/>
            <person name="Mulligan S."/>
            <person name="Carty H.A."/>
            <person name="Cline R.T."/>
            <person name="Van Aken S.E."/>
            <person name="Gill J."/>
            <person name="Scarselli M."/>
            <person name="Mora M."/>
            <person name="Iacobini E.T."/>
            <person name="Brettoni C."/>
            <person name="Galli G."/>
            <person name="Mariani M."/>
            <person name="Vegni F."/>
            <person name="Maione D."/>
            <person name="Rinaudo D."/>
            <person name="Rappuoli R."/>
            <person name="Telford J.L."/>
            <person name="Kasper D.L."/>
            <person name="Grandi G."/>
            <person name="Fraser C.M."/>
        </authorList>
    </citation>
    <scope>NUCLEOTIDE SEQUENCE [LARGE SCALE GENOMIC DNA]</scope>
    <source>
        <strain>ATCC BAA-611 / 2603 V/R</strain>
    </source>
</reference>
<proteinExistence type="inferred from homology"/>
<name>PYRR_STRA5</name>
<feature type="chain" id="PRO_1000053867" description="Bifunctional protein PyrR">
    <location>
        <begin position="1"/>
        <end position="173"/>
    </location>
</feature>
<feature type="short sequence motif" description="PRPP-binding" evidence="1">
    <location>
        <begin position="93"/>
        <end position="105"/>
    </location>
</feature>
<keyword id="KW-0328">Glycosyltransferase</keyword>
<keyword id="KW-1185">Reference proteome</keyword>
<keyword id="KW-0694">RNA-binding</keyword>
<keyword id="KW-0804">Transcription</keyword>
<keyword id="KW-0805">Transcription regulation</keyword>
<keyword id="KW-0806">Transcription termination</keyword>
<keyword id="KW-0808">Transferase</keyword>
<sequence length="173" mass="19800">MKRKEIIDDVTMKRAITRITYEIIERNKNLDNIVLAGIKTRGVFLAKRIQERLKQLENLDIPVGELDTKPFRDDMKVEVDTTTMPVDITDKDIILIDDVLYTGRTIRAAIDNLVSLGRPSRVSLAVLIDRGHRELPIRADYVGKNIPTSQFEEILVEVMEHDGYDRVSIIDPS</sequence>